<sequence>MSDKPDMAEIEKFDKSKLKKTETQEKNPLPSKETIEQEKQAGES</sequence>
<feature type="initiator methionine" description="Removed" evidence="2">
    <location>
        <position position="1"/>
    </location>
</feature>
<feature type="chain" id="PRO_0000045927" description="Thymosin beta-4">
    <location>
        <begin position="2"/>
        <end position="44"/>
    </location>
</feature>
<feature type="peptide" id="PRO_0000034301" description="Hematopoietic system regulatory peptide" evidence="1">
    <location>
        <begin position="2"/>
        <end position="5"/>
    </location>
</feature>
<feature type="region of interest" description="Disordered" evidence="4">
    <location>
        <begin position="1"/>
        <end position="44"/>
    </location>
</feature>
<feature type="compositionally biased region" description="Basic and acidic residues" evidence="4">
    <location>
        <begin position="1"/>
        <end position="25"/>
    </location>
</feature>
<feature type="compositionally biased region" description="Basic and acidic residues" evidence="4">
    <location>
        <begin position="33"/>
        <end position="44"/>
    </location>
</feature>
<feature type="modified residue" description="N-acetylserine" evidence="2">
    <location>
        <position position="2"/>
    </location>
</feature>
<feature type="modified residue" description="Phosphoserine" evidence="8">
    <location>
        <position position="2"/>
    </location>
</feature>
<feature type="modified residue" description="N6-acetyllysine" evidence="3">
    <location>
        <position position="4"/>
    </location>
</feature>
<feature type="modified residue" description="N6-acetyllysine; alternate" evidence="3">
    <location>
        <position position="12"/>
    </location>
</feature>
<feature type="modified residue" description="Phosphothreonine" evidence="3">
    <location>
        <position position="23"/>
    </location>
</feature>
<feature type="modified residue" description="N6-acetyllysine" evidence="3">
    <location>
        <position position="26"/>
    </location>
</feature>
<feature type="modified residue" description="Phosphoserine" evidence="3">
    <location>
        <position position="31"/>
    </location>
</feature>
<feature type="modified residue" description="N6-acetyllysine" evidence="3">
    <location>
        <position position="32"/>
    </location>
</feature>
<feature type="modified residue" description="Phosphothreonine" evidence="8">
    <location>
        <position position="34"/>
    </location>
</feature>
<feature type="modified residue" description="N6-acetyllysine" evidence="3">
    <location>
        <position position="39"/>
    </location>
</feature>
<feature type="cross-link" description="Glycyl lysine isopeptide (Lys-Gly) (interchain with G-Cter in SUMO2); alternate" evidence="3">
    <location>
        <position position="12"/>
    </location>
</feature>
<feature type="sequence conflict" description="In Ref. 2; AAA42245." evidence="7" ref="2">
    <original>A</original>
    <variation>V</variation>
    <location>
        <position position="8"/>
    </location>
</feature>
<name>TYB4_RAT</name>
<accession>P62329</accession>
<accession>P01253</accession>
<accession>P01254</accession>
<accession>Q0P5V6</accession>
<accession>Q63576</accession>
<protein>
    <recommendedName>
        <fullName>Thymosin beta-4</fullName>
        <shortName>T beta 4</shortName>
    </recommendedName>
    <component>
        <recommendedName>
            <fullName>Hematopoietic system regulatory peptide</fullName>
        </recommendedName>
        <alternativeName>
            <fullName>Seraspenide</fullName>
        </alternativeName>
    </component>
</protein>
<organism>
    <name type="scientific">Rattus norvegicus</name>
    <name type="common">Rat</name>
    <dbReference type="NCBI Taxonomy" id="10116"/>
    <lineage>
        <taxon>Eukaryota</taxon>
        <taxon>Metazoa</taxon>
        <taxon>Chordata</taxon>
        <taxon>Craniata</taxon>
        <taxon>Vertebrata</taxon>
        <taxon>Euteleostomi</taxon>
        <taxon>Mammalia</taxon>
        <taxon>Eutheria</taxon>
        <taxon>Euarchontoglires</taxon>
        <taxon>Glires</taxon>
        <taxon>Rodentia</taxon>
        <taxon>Myomorpha</taxon>
        <taxon>Muroidea</taxon>
        <taxon>Muridae</taxon>
        <taxon>Murinae</taxon>
        <taxon>Rattus</taxon>
    </lineage>
</organism>
<keyword id="KW-0007">Acetylation</keyword>
<keyword id="KW-0009">Actin-binding</keyword>
<keyword id="KW-0963">Cytoplasm</keyword>
<keyword id="KW-0206">Cytoskeleton</keyword>
<keyword id="KW-1017">Isopeptide bond</keyword>
<keyword id="KW-0597">Phosphoprotein</keyword>
<keyword id="KW-1185">Reference proteome</keyword>
<keyword id="KW-0832">Ubl conjugation</keyword>
<gene>
    <name type="primary">Tmsb4x</name>
    <name type="synonym">Thyb4</name>
    <name type="synonym">Tmsb4</name>
</gene>
<dbReference type="EMBL" id="M34043">
    <property type="protein sequence ID" value="AAA42062.1"/>
    <property type="molecule type" value="mRNA"/>
</dbReference>
<dbReference type="EMBL" id="K01334">
    <property type="protein sequence ID" value="AAA42245.1"/>
    <property type="molecule type" value="mRNA"/>
</dbReference>
<dbReference type="EMBL" id="M26759">
    <property type="protein sequence ID" value="AAA42246.1"/>
    <property type="status" value="ALT_INIT"/>
    <property type="molecule type" value="mRNA"/>
</dbReference>
<dbReference type="EMBL" id="BC058137">
    <property type="protein sequence ID" value="AAH58137.1"/>
    <property type="molecule type" value="mRNA"/>
</dbReference>
<dbReference type="PIR" id="A01522">
    <property type="entry name" value="TNRTB4"/>
</dbReference>
<dbReference type="PIR" id="I52084">
    <property type="entry name" value="I52084"/>
</dbReference>
<dbReference type="RefSeq" id="NP_112398.1">
    <property type="nucleotide sequence ID" value="NM_031136.2"/>
</dbReference>
<dbReference type="SMR" id="P62329"/>
<dbReference type="FunCoup" id="P62329">
    <property type="interactions" value="192"/>
</dbReference>
<dbReference type="STRING" id="10116.ENSRNOP00000066062"/>
<dbReference type="iPTMnet" id="P62329"/>
<dbReference type="PhosphoSitePlus" id="P62329"/>
<dbReference type="PaxDb" id="10116-ENSRNOP00000066062"/>
<dbReference type="GeneID" id="81814"/>
<dbReference type="KEGG" id="rno:81814"/>
<dbReference type="AGR" id="RGD:621622"/>
<dbReference type="CTD" id="7114"/>
<dbReference type="RGD" id="621622">
    <property type="gene designation" value="Tmsb4x"/>
</dbReference>
<dbReference type="VEuPathDB" id="HostDB:ENSRNOG00000047931"/>
<dbReference type="eggNOG" id="KOG4794">
    <property type="taxonomic scope" value="Eukaryota"/>
</dbReference>
<dbReference type="HOGENOM" id="CLU_208046_0_0_1"/>
<dbReference type="InParanoid" id="P62329"/>
<dbReference type="OrthoDB" id="49300at9989"/>
<dbReference type="PhylomeDB" id="P62329"/>
<dbReference type="PRO" id="PR:P62329"/>
<dbReference type="Proteomes" id="UP000002494">
    <property type="component" value="Chromosome X"/>
</dbReference>
<dbReference type="Bgee" id="ENSRNOG00000047931">
    <property type="expression patterns" value="Expressed in thymus and 20 other cell types or tissues"/>
</dbReference>
<dbReference type="GO" id="GO:0005737">
    <property type="term" value="C:cytoplasm"/>
    <property type="evidence" value="ECO:0000266"/>
    <property type="project" value="RGD"/>
</dbReference>
<dbReference type="GO" id="GO:0005856">
    <property type="term" value="C:cytoskeleton"/>
    <property type="evidence" value="ECO:0007669"/>
    <property type="project" value="UniProtKB-SubCell"/>
</dbReference>
<dbReference type="GO" id="GO:0005829">
    <property type="term" value="C:cytosol"/>
    <property type="evidence" value="ECO:0000266"/>
    <property type="project" value="RGD"/>
</dbReference>
<dbReference type="GO" id="GO:0005634">
    <property type="term" value="C:nucleus"/>
    <property type="evidence" value="ECO:0000266"/>
    <property type="project" value="RGD"/>
</dbReference>
<dbReference type="GO" id="GO:0003785">
    <property type="term" value="F:actin monomer binding"/>
    <property type="evidence" value="ECO:0000266"/>
    <property type="project" value="RGD"/>
</dbReference>
<dbReference type="GO" id="GO:0019899">
    <property type="term" value="F:enzyme binding"/>
    <property type="evidence" value="ECO:0000266"/>
    <property type="project" value="RGD"/>
</dbReference>
<dbReference type="GO" id="GO:0140311">
    <property type="term" value="F:protein sequestering activity"/>
    <property type="evidence" value="ECO:0000266"/>
    <property type="project" value="RGD"/>
</dbReference>
<dbReference type="GO" id="GO:0007015">
    <property type="term" value="P:actin filament organization"/>
    <property type="evidence" value="ECO:0007669"/>
    <property type="project" value="InterPro"/>
</dbReference>
<dbReference type="GO" id="GO:0030837">
    <property type="term" value="P:negative regulation of actin filament polymerization"/>
    <property type="evidence" value="ECO:0000266"/>
    <property type="project" value="RGD"/>
</dbReference>
<dbReference type="GO" id="GO:0043124">
    <property type="term" value="P:negative regulation of canonical NF-kappaB signal transduction"/>
    <property type="evidence" value="ECO:0000266"/>
    <property type="project" value="RGD"/>
</dbReference>
<dbReference type="GO" id="GO:0050728">
    <property type="term" value="P:negative regulation of inflammatory response"/>
    <property type="evidence" value="ECO:0000266"/>
    <property type="project" value="RGD"/>
</dbReference>
<dbReference type="GO" id="GO:0001649">
    <property type="term" value="P:osteoblast differentiation"/>
    <property type="evidence" value="ECO:0000270"/>
    <property type="project" value="RGD"/>
</dbReference>
<dbReference type="GO" id="GO:2001171">
    <property type="term" value="P:positive regulation of ATP biosynthetic process"/>
    <property type="evidence" value="ECO:0000266"/>
    <property type="project" value="RGD"/>
</dbReference>
<dbReference type="GO" id="GO:0043536">
    <property type="term" value="P:positive regulation of blood vessel endothelial cell migration"/>
    <property type="evidence" value="ECO:0000266"/>
    <property type="project" value="RGD"/>
</dbReference>
<dbReference type="GO" id="GO:2001028">
    <property type="term" value="P:positive regulation of endothelial cell chemotaxis"/>
    <property type="evidence" value="ECO:0000266"/>
    <property type="project" value="RGD"/>
</dbReference>
<dbReference type="GO" id="GO:0030334">
    <property type="term" value="P:regulation of cell migration"/>
    <property type="evidence" value="ECO:0000266"/>
    <property type="project" value="RGD"/>
</dbReference>
<dbReference type="GO" id="GO:0033209">
    <property type="term" value="P:tumor necrosis factor-mediated signaling pathway"/>
    <property type="evidence" value="ECO:0000266"/>
    <property type="project" value="RGD"/>
</dbReference>
<dbReference type="CDD" id="cd22059">
    <property type="entry name" value="WH2_BetaT"/>
    <property type="match status" value="1"/>
</dbReference>
<dbReference type="FunFam" id="1.20.5.520:FF:000001">
    <property type="entry name" value="Thymosin beta"/>
    <property type="match status" value="1"/>
</dbReference>
<dbReference type="Gene3D" id="1.20.5.520">
    <property type="entry name" value="Single helix bin"/>
    <property type="match status" value="1"/>
</dbReference>
<dbReference type="InterPro" id="IPR001152">
    <property type="entry name" value="Beta-thymosin"/>
</dbReference>
<dbReference type="InterPro" id="IPR038386">
    <property type="entry name" value="Beta-thymosin_sf"/>
</dbReference>
<dbReference type="PANTHER" id="PTHR12021">
    <property type="entry name" value="THYMOSIN BETA"/>
    <property type="match status" value="1"/>
</dbReference>
<dbReference type="PANTHER" id="PTHR12021:SF20">
    <property type="entry name" value="THYMOSIN BETA-4"/>
    <property type="match status" value="1"/>
</dbReference>
<dbReference type="Pfam" id="PF01290">
    <property type="entry name" value="Thymosin"/>
    <property type="match status" value="1"/>
</dbReference>
<dbReference type="PIRSF" id="PIRSF001828">
    <property type="entry name" value="Thymosin_beta"/>
    <property type="match status" value="1"/>
</dbReference>
<dbReference type="SMART" id="SM00152">
    <property type="entry name" value="THY"/>
    <property type="match status" value="1"/>
</dbReference>
<dbReference type="PROSITE" id="PS00500">
    <property type="entry name" value="THYMOSIN_B4"/>
    <property type="match status" value="1"/>
</dbReference>
<evidence type="ECO:0000250" key="1"/>
<evidence type="ECO:0000250" key="2">
    <source>
        <dbReference type="UniProtKB" id="P62326"/>
    </source>
</evidence>
<evidence type="ECO:0000250" key="3">
    <source>
        <dbReference type="UniProtKB" id="P62328"/>
    </source>
</evidence>
<evidence type="ECO:0000256" key="4">
    <source>
        <dbReference type="SAM" id="MobiDB-lite"/>
    </source>
</evidence>
<evidence type="ECO:0000269" key="5">
    <source>
    </source>
</evidence>
<evidence type="ECO:0000269" key="6">
    <source>
    </source>
</evidence>
<evidence type="ECO:0000305" key="7"/>
<evidence type="ECO:0007744" key="8">
    <source>
    </source>
</evidence>
<reference key="1">
    <citation type="journal article" date="1990" name="Mol. Endocrinol.">
        <title>Thymosin beta 4 is expressed in ROS 17/2.8 osteosarcoma cells in a regulated manner.</title>
        <authorList>
            <person name="Atkinson M.J."/>
            <person name="Freeman M.W."/>
            <person name="Kronenberg H.M."/>
        </authorList>
    </citation>
    <scope>NUCLEOTIDE SEQUENCE [MRNA]</scope>
</reference>
<reference key="2">
    <citation type="journal article" date="1984" name="Proc. Natl. Acad. Sci. U.S.A.">
        <title>Cloning and sequence analysis of cDNA for rat spleen thymosin beta 4.</title>
        <authorList>
            <person name="Wodnar-Filipowicz A."/>
            <person name="Gubler U."/>
            <person name="Furuichi Y."/>
            <person name="Richardson M."/>
            <person name="Nowoswiat E.F."/>
            <person name="Poonian M.S."/>
            <person name="Horecker B.L."/>
        </authorList>
    </citation>
    <scope>NUCLEOTIDE SEQUENCE [MRNA]</scope>
    <scope>FUNCTION</scope>
</reference>
<reference key="3">
    <citation type="journal article" date="1985" name="Arch. Biochem. Biophys.">
        <title>Sequence of a cloned 523-bp cDNA for thymosin beta 4.</title>
        <authorList>
            <person name="Goodall G.J."/>
            <person name="Richardson M."/>
            <person name="Furuichi Y."/>
            <person name="Wodnar-Filippwicz A."/>
            <person name="Horecker B.L."/>
        </authorList>
    </citation>
    <scope>NUCLEOTIDE SEQUENCE [MRNA]</scope>
</reference>
<reference key="4">
    <citation type="journal article" date="2004" name="Genome Res.">
        <title>The status, quality, and expansion of the NIH full-length cDNA project: the Mammalian Gene Collection (MGC).</title>
        <authorList>
            <consortium name="The MGC Project Team"/>
        </authorList>
    </citation>
    <scope>NUCLEOTIDE SEQUENCE [LARGE SCALE MRNA]</scope>
    <source>
        <tissue>Pituitary</tissue>
    </source>
</reference>
<reference key="5">
    <citation type="journal article" date="1982" name="Proc. Natl. Acad. Sci. U.S.A.">
        <title>Thymosin beta 4: a ubiquitous peptide in rat and mouse tissues.</title>
        <authorList>
            <person name="Hannappel E."/>
            <person name="Xu G.J."/>
            <person name="Morgan J."/>
            <person name="Hempstead J."/>
            <person name="Horecker B.L."/>
        </authorList>
    </citation>
    <scope>TISSUE SPECIFICITY</scope>
</reference>
<reference key="6">
    <citation type="journal article" date="1987" name="Mol. Cell. Biol.">
        <title>Identification and characterization of mRNAs regulated by nerve growth factor in PC12 cells.</title>
        <authorList>
            <person name="Leonard D.G."/>
            <person name="Ziff E.B."/>
            <person name="Greene L.A."/>
        </authorList>
    </citation>
    <scope>INDUCTION</scope>
</reference>
<reference key="7">
    <citation type="journal article" date="2012" name="Nat. Commun.">
        <title>Quantitative maps of protein phosphorylation sites across 14 different rat organs and tissues.</title>
        <authorList>
            <person name="Lundby A."/>
            <person name="Secher A."/>
            <person name="Lage K."/>
            <person name="Nordsborg N.B."/>
            <person name="Dmytriyev A."/>
            <person name="Lundby C."/>
            <person name="Olsen J.V."/>
        </authorList>
    </citation>
    <scope>PHOSPHORYLATION [LARGE SCALE ANALYSIS] AT SER-2 AND THR-34</scope>
    <scope>IDENTIFICATION BY MASS SPECTROMETRY [LARGE SCALE ANALYSIS]</scope>
</reference>
<proteinExistence type="evidence at protein level"/>
<comment type="function">
    <text evidence="1">Plays an important role in the organization of the cytoskeleton. Binds to and sequesters actin monomers (G actin) and therefore inhibits actin polymerization (By similarity).</text>
</comment>
<comment type="function">
    <text evidence="1">Seraspenide inhibits the entry of hematopoietic pluripotent stem cells into the S-phase.</text>
</comment>
<comment type="subunit">
    <text evidence="1">Interacts with SERPINB1. Identified in a complex composed of ACTA1, COBL, GSN and TMSB4X (By similarity).</text>
</comment>
<comment type="subcellular location">
    <subcellularLocation>
        <location>Cytoplasm</location>
        <location>Cytoskeleton</location>
    </subcellularLocation>
</comment>
<comment type="tissue specificity">
    <text evidence="6">Originally found in thymus but it is widely distributed in many tissues.</text>
</comment>
<comment type="induction">
    <text evidence="5">By NGF and fibroblast growth factors.</text>
</comment>
<comment type="similarity">
    <text evidence="7">Belongs to the thymosin beta family.</text>
</comment>
<comment type="sequence caution" evidence="7">
    <conflict type="erroneous initiation">
        <sequence resource="EMBL-CDS" id="AAA42246"/>
    </conflict>
</comment>